<name>CFA47_HUMAN</name>
<protein>
    <recommendedName>
        <fullName evidence="6">Cilia- and flagella-associated protein 47</fullName>
    </recommendedName>
</protein>
<keyword id="KW-0025">Alternative splicing</keyword>
<keyword id="KW-0966">Cell projection</keyword>
<keyword id="KW-0969">Cilium</keyword>
<keyword id="KW-0963">Cytoplasm</keyword>
<keyword id="KW-0206">Cytoskeleton</keyword>
<keyword id="KW-0282">Flagellum</keyword>
<keyword id="KW-1267">Proteomics identification</keyword>
<keyword id="KW-1185">Reference proteome</keyword>
<proteinExistence type="evidence at protein level"/>
<feature type="chain" id="PRO_0000079731" description="Cilia- and flagella-associated protein 47">
    <location>
        <begin position="1"/>
        <end position="3187"/>
    </location>
</feature>
<feature type="domain" description="Calponin-homology (CH)" evidence="1">
    <location>
        <begin position="1746"/>
        <end position="1869"/>
    </location>
</feature>
<feature type="region of interest" description="Disordered" evidence="2">
    <location>
        <begin position="2024"/>
        <end position="2052"/>
    </location>
</feature>
<feature type="compositionally biased region" description="Basic and acidic residues" evidence="2">
    <location>
        <begin position="2026"/>
        <end position="2037"/>
    </location>
</feature>
<feature type="splice variant" id="VSP_014372" description="In isoform 2." evidence="8">
    <original>GPS</original>
    <variation>VRY</variation>
    <location>
        <begin position="752"/>
        <end position="754"/>
    </location>
</feature>
<feature type="splice variant" id="VSP_014373" description="In isoform 2." evidence="8">
    <location>
        <begin position="755"/>
        <end position="3187"/>
    </location>
</feature>
<feature type="splice variant" id="VSP_057885" description="In isoform 1.">
    <original>LGRTKVLLLQPRILFSNCPQGLTTWRKA</original>
    <variation>VIIFLEHGFCFEGYEFVGYTLVYIVTYI</variation>
    <location>
        <begin position="949"/>
        <end position="976"/>
    </location>
</feature>
<feature type="splice variant" id="VSP_057886" description="In isoform 1." evidence="7">
    <location>
        <begin position="977"/>
        <end position="3187"/>
    </location>
</feature>
<feature type="splice variant" id="VSP_059490" description="In isoform 6.">
    <original>ATDICDPNPILMLMLCVYMYERLPTYLPKKVVSFECTLHDTVLNKILLKNSSSRNLVYNARIVGRDAADFSLSQKGNVVTIS</original>
    <variation>VCLRVFPKEMDAGVSGLRKEDMPSVWVVTIRLAVAVARTKRQKKGDIQFACFFVCLFFFIFVVISFSLWSRMHFFLLLPLDI</variation>
    <location>
        <begin position="1846"/>
        <end position="1927"/>
    </location>
</feature>
<feature type="splice variant" id="VSP_059491" description="In isoform 6.">
    <location>
        <begin position="1928"/>
        <end position="3187"/>
    </location>
</feature>
<feature type="sequence variant" id="VAR_056856" description="In dbSNP:rs2336029." evidence="3">
    <original>V</original>
    <variation>M</variation>
    <location>
        <position position="236"/>
    </location>
</feature>
<feature type="sequence variant" id="VAR_060280" description="In dbSNP:rs6632427.">
    <original>C</original>
    <variation>R</variation>
    <location>
        <position position="345"/>
    </location>
</feature>
<feature type="sequence variant" id="VAR_060281" description="In dbSNP:rs11795910.">
    <original>A</original>
    <variation>T</variation>
    <location>
        <position position="561"/>
    </location>
</feature>
<feature type="sequence variant" id="VAR_060282" description="In dbSNP:rs17852470." evidence="4">
    <original>H</original>
    <variation>Y</variation>
    <location>
        <position position="634"/>
    </location>
</feature>
<feature type="sequence variant" id="VAR_085272" description="In SPGFX3; uncertain significance; loss of protein expression; loss of CFAP65 flagellar location; uncertain significance; dbSNP:rs1214810484." evidence="5">
    <original>S</original>
    <variation>G</variation>
    <location>
        <position position="1742"/>
    </location>
</feature>
<feature type="sequence variant" id="VAR_085273" description="In SPGFX3; uncertain significance; loss of protein expression; loss of CFAP65 flagellar location; dbSNP:rs1940460729." evidence="5">
    <original>I</original>
    <variation>N</variation>
    <location>
        <position position="2385"/>
    </location>
</feature>
<feature type="sequence variant" id="VAR_085274" description="In SPGFX3; uncertain significance; strongly decreased protein expression; dbSNP:rs1317932026." evidence="5">
    <original>P</original>
    <variation>T</variation>
    <location>
        <position position="2890"/>
    </location>
</feature>
<feature type="sequence conflict" description="In Ref. 1; BAC86517." evidence="6" ref="1">
    <original>A</original>
    <variation>T</variation>
    <location>
        <position position="522"/>
    </location>
</feature>
<feature type="sequence conflict" description="In Ref. 1; BAC86517." evidence="6" ref="1">
    <original>A</original>
    <variation>S</variation>
    <location>
        <position position="903"/>
    </location>
</feature>
<feature type="sequence variant" id="VAR_082879" description="In dbSNP:rs6629027." evidence="6">
    <original>F</original>
    <variation>L</variation>
    <location sequence="Q6ZTR5-1">
        <position position="964"/>
    </location>
</feature>
<accession>Q6ZTR5</accession>
<accession>A0A140T8X2</accession>
<accession>A6PW82</accession>
<accession>B1ARL5</accession>
<accession>Q5JRM8</accession>
<accession>Q8N6X8</accession>
<accession>Q8N9S7</accession>
<comment type="function">
    <text evidence="5">Plays a role in flagellar formation and sperm motility.</text>
</comment>
<comment type="subunit">
    <text evidence="5">Interacts with CFAP65.</text>
</comment>
<comment type="interaction">
    <interactant intactId="EBI-9996254">
        <id>Q6ZTR5</id>
    </interactant>
    <interactant intactId="EBI-413034">
        <id>P0CG47</id>
        <label>UBB</label>
    </interactant>
    <organismsDiffer>false</organismsDiffer>
    <experiments>2</experiments>
</comment>
<comment type="subcellular location">
    <subcellularLocation>
        <location evidence="5">Cytoplasm</location>
        <location evidence="5">Cytoskeleton</location>
        <location evidence="5">Flagellum basal body</location>
    </subcellularLocation>
</comment>
<comment type="alternative products">
    <event type="alternative splicing"/>
    <isoform>
        <id>Q6ZTR5-5</id>
        <name>5</name>
        <sequence type="displayed"/>
    </isoform>
    <isoform>
        <id>Q6ZTR5-1</id>
        <name>1</name>
        <sequence type="described" ref="VSP_057885 VSP_057886"/>
    </isoform>
    <isoform>
        <id>Q6ZTR5-2</id>
        <name>2</name>
        <sequence type="described" ref="VSP_014372 VSP_014373"/>
    </isoform>
    <isoform>
        <id>Q6ZTR5-6</id>
        <name>6</name>
        <sequence type="described" ref="VSP_059490 VSP_059491"/>
    </isoform>
</comment>
<comment type="tissue specificity">
    <text evidence="5">Highly expressed in spermatzoa (at protein level).</text>
</comment>
<comment type="disease" evidence="5">
    <disease id="DI-06023">
        <name>Spermatogenic failure, X-linked, 3</name>
        <acronym>SPGFX3</acronym>
        <description>An infertility disorder characterized by asthenoteratozoospermia. Spermatozoa exhibit multiple morphologic abnormalities, including absent, short, coiled, and irregular-caliber flagella.</description>
        <dbReference type="MIM" id="301059"/>
    </disease>
    <text>The disease is caused by variants affecting the gene represented in this entry.</text>
</comment>
<comment type="sequence caution" evidence="6">
    <conflict type="erroneous initiation">
        <sequence resource="EMBL-CDS" id="AAI01699"/>
    </conflict>
    <text>Truncated N-terminus.</text>
</comment>
<comment type="sequence caution" evidence="6">
    <conflict type="erroneous initiation">
        <sequence resource="EMBL-CDS" id="AAI01701"/>
    </conflict>
    <text>Truncated N-terminus.</text>
</comment>
<comment type="sequence caution" evidence="6">
    <conflict type="erroneous initiation">
        <sequence resource="EMBL-CDS" id="BAC04251"/>
    </conflict>
    <text>Truncated N-terminus.</text>
</comment>
<evidence type="ECO:0000255" key="1">
    <source>
        <dbReference type="PROSITE-ProRule" id="PRU00044"/>
    </source>
</evidence>
<evidence type="ECO:0000256" key="2">
    <source>
        <dbReference type="SAM" id="MobiDB-lite"/>
    </source>
</evidence>
<evidence type="ECO:0000269" key="3">
    <source>
    </source>
</evidence>
<evidence type="ECO:0000269" key="4">
    <source>
    </source>
</evidence>
<evidence type="ECO:0000269" key="5">
    <source>
    </source>
</evidence>
<evidence type="ECO:0000305" key="6"/>
<evidence type="ECO:0000305" key="7">
    <source>
    </source>
</evidence>
<evidence type="ECO:0000305" key="8">
    <source>
    </source>
</evidence>
<evidence type="ECO:0000312" key="9">
    <source>
        <dbReference type="HGNC" id="HGNC:26708"/>
    </source>
</evidence>
<reference key="1">
    <citation type="journal article" date="2004" name="Nat. Genet.">
        <title>Complete sequencing and characterization of 21,243 full-length human cDNAs.</title>
        <authorList>
            <person name="Ota T."/>
            <person name="Suzuki Y."/>
            <person name="Nishikawa T."/>
            <person name="Otsuki T."/>
            <person name="Sugiyama T."/>
            <person name="Irie R."/>
            <person name="Wakamatsu A."/>
            <person name="Hayashi K."/>
            <person name="Sato H."/>
            <person name="Nagai K."/>
            <person name="Kimura K."/>
            <person name="Makita H."/>
            <person name="Sekine M."/>
            <person name="Obayashi M."/>
            <person name="Nishi T."/>
            <person name="Shibahara T."/>
            <person name="Tanaka T."/>
            <person name="Ishii S."/>
            <person name="Yamamoto J."/>
            <person name="Saito K."/>
            <person name="Kawai Y."/>
            <person name="Isono Y."/>
            <person name="Nakamura Y."/>
            <person name="Nagahari K."/>
            <person name="Murakami K."/>
            <person name="Yasuda T."/>
            <person name="Iwayanagi T."/>
            <person name="Wagatsuma M."/>
            <person name="Shiratori A."/>
            <person name="Sudo H."/>
            <person name="Hosoiri T."/>
            <person name="Kaku Y."/>
            <person name="Kodaira H."/>
            <person name="Kondo H."/>
            <person name="Sugawara M."/>
            <person name="Takahashi M."/>
            <person name="Kanda K."/>
            <person name="Yokoi T."/>
            <person name="Furuya T."/>
            <person name="Kikkawa E."/>
            <person name="Omura Y."/>
            <person name="Abe K."/>
            <person name="Kamihara K."/>
            <person name="Katsuta N."/>
            <person name="Sato K."/>
            <person name="Tanikawa M."/>
            <person name="Yamazaki M."/>
            <person name="Ninomiya K."/>
            <person name="Ishibashi T."/>
            <person name="Yamashita H."/>
            <person name="Murakawa K."/>
            <person name="Fujimori K."/>
            <person name="Tanai H."/>
            <person name="Kimata M."/>
            <person name="Watanabe M."/>
            <person name="Hiraoka S."/>
            <person name="Chiba Y."/>
            <person name="Ishida S."/>
            <person name="Ono Y."/>
            <person name="Takiguchi S."/>
            <person name="Watanabe S."/>
            <person name="Yosida M."/>
            <person name="Hotuta T."/>
            <person name="Kusano J."/>
            <person name="Kanehori K."/>
            <person name="Takahashi-Fujii A."/>
            <person name="Hara H."/>
            <person name="Tanase T.-O."/>
            <person name="Nomura Y."/>
            <person name="Togiya S."/>
            <person name="Komai F."/>
            <person name="Hara R."/>
            <person name="Takeuchi K."/>
            <person name="Arita M."/>
            <person name="Imose N."/>
            <person name="Musashino K."/>
            <person name="Yuuki H."/>
            <person name="Oshima A."/>
            <person name="Sasaki N."/>
            <person name="Aotsuka S."/>
            <person name="Yoshikawa Y."/>
            <person name="Matsunawa H."/>
            <person name="Ichihara T."/>
            <person name="Shiohata N."/>
            <person name="Sano S."/>
            <person name="Moriya S."/>
            <person name="Momiyama H."/>
            <person name="Satoh N."/>
            <person name="Takami S."/>
            <person name="Terashima Y."/>
            <person name="Suzuki O."/>
            <person name="Nakagawa S."/>
            <person name="Senoh A."/>
            <person name="Mizoguchi H."/>
            <person name="Goto Y."/>
            <person name="Shimizu F."/>
            <person name="Wakebe H."/>
            <person name="Hishigaki H."/>
            <person name="Watanabe T."/>
            <person name="Sugiyama A."/>
            <person name="Takemoto M."/>
            <person name="Kawakami B."/>
            <person name="Yamazaki M."/>
            <person name="Watanabe K."/>
            <person name="Kumagai A."/>
            <person name="Itakura S."/>
            <person name="Fukuzumi Y."/>
            <person name="Fujimori Y."/>
            <person name="Komiyama M."/>
            <person name="Tashiro H."/>
            <person name="Tanigami A."/>
            <person name="Fujiwara T."/>
            <person name="Ono T."/>
            <person name="Yamada K."/>
            <person name="Fujii Y."/>
            <person name="Ozaki K."/>
            <person name="Hirao M."/>
            <person name="Ohmori Y."/>
            <person name="Kawabata A."/>
            <person name="Hikiji T."/>
            <person name="Kobatake N."/>
            <person name="Inagaki H."/>
            <person name="Ikema Y."/>
            <person name="Okamoto S."/>
            <person name="Okitani R."/>
            <person name="Kawakami T."/>
            <person name="Noguchi S."/>
            <person name="Itoh T."/>
            <person name="Shigeta K."/>
            <person name="Senba T."/>
            <person name="Matsumura K."/>
            <person name="Nakajima Y."/>
            <person name="Mizuno T."/>
            <person name="Morinaga M."/>
            <person name="Sasaki M."/>
            <person name="Togashi T."/>
            <person name="Oyama M."/>
            <person name="Hata H."/>
            <person name="Watanabe M."/>
            <person name="Komatsu T."/>
            <person name="Mizushima-Sugano J."/>
            <person name="Satoh T."/>
            <person name="Shirai Y."/>
            <person name="Takahashi Y."/>
            <person name="Nakagawa K."/>
            <person name="Okumura K."/>
            <person name="Nagase T."/>
            <person name="Nomura N."/>
            <person name="Kikuchi H."/>
            <person name="Masuho Y."/>
            <person name="Yamashita R."/>
            <person name="Nakai K."/>
            <person name="Yada T."/>
            <person name="Nakamura Y."/>
            <person name="Ohara O."/>
            <person name="Isogai T."/>
            <person name="Sugano S."/>
        </authorList>
    </citation>
    <scope>NUCLEOTIDE SEQUENCE [LARGE SCALE MRNA] (ISOFORM 1)</scope>
    <scope>NUCLEOTIDE SEQUENCE [LARGE SCALE MRNA] OF 1364-3187 (ISOFORM 6)</scope>
    <scope>VARIANT MET-236</scope>
    <source>
        <tissue>Trachea</tissue>
    </source>
</reference>
<reference key="2">
    <citation type="journal article" date="2005" name="Nature">
        <title>The DNA sequence of the human X chromosome.</title>
        <authorList>
            <person name="Ross M.T."/>
            <person name="Grafham D.V."/>
            <person name="Coffey A.J."/>
            <person name="Scherer S."/>
            <person name="McLay K."/>
            <person name="Muzny D."/>
            <person name="Platzer M."/>
            <person name="Howell G.R."/>
            <person name="Burrows C."/>
            <person name="Bird C.P."/>
            <person name="Frankish A."/>
            <person name="Lovell F.L."/>
            <person name="Howe K.L."/>
            <person name="Ashurst J.L."/>
            <person name="Fulton R.S."/>
            <person name="Sudbrak R."/>
            <person name="Wen G."/>
            <person name="Jones M.C."/>
            <person name="Hurles M.E."/>
            <person name="Andrews T.D."/>
            <person name="Scott C.E."/>
            <person name="Searle S."/>
            <person name="Ramser J."/>
            <person name="Whittaker A."/>
            <person name="Deadman R."/>
            <person name="Carter N.P."/>
            <person name="Hunt S.E."/>
            <person name="Chen R."/>
            <person name="Cree A."/>
            <person name="Gunaratne P."/>
            <person name="Havlak P."/>
            <person name="Hodgson A."/>
            <person name="Metzker M.L."/>
            <person name="Richards S."/>
            <person name="Scott G."/>
            <person name="Steffen D."/>
            <person name="Sodergren E."/>
            <person name="Wheeler D.A."/>
            <person name="Worley K.C."/>
            <person name="Ainscough R."/>
            <person name="Ambrose K.D."/>
            <person name="Ansari-Lari M.A."/>
            <person name="Aradhya S."/>
            <person name="Ashwell R.I."/>
            <person name="Babbage A.K."/>
            <person name="Bagguley C.L."/>
            <person name="Ballabio A."/>
            <person name="Banerjee R."/>
            <person name="Barker G.E."/>
            <person name="Barlow K.F."/>
            <person name="Barrett I.P."/>
            <person name="Bates K.N."/>
            <person name="Beare D.M."/>
            <person name="Beasley H."/>
            <person name="Beasley O."/>
            <person name="Beck A."/>
            <person name="Bethel G."/>
            <person name="Blechschmidt K."/>
            <person name="Brady N."/>
            <person name="Bray-Allen S."/>
            <person name="Bridgeman A.M."/>
            <person name="Brown A.J."/>
            <person name="Brown M.J."/>
            <person name="Bonnin D."/>
            <person name="Bruford E.A."/>
            <person name="Buhay C."/>
            <person name="Burch P."/>
            <person name="Burford D."/>
            <person name="Burgess J."/>
            <person name="Burrill W."/>
            <person name="Burton J."/>
            <person name="Bye J.M."/>
            <person name="Carder C."/>
            <person name="Carrel L."/>
            <person name="Chako J."/>
            <person name="Chapman J.C."/>
            <person name="Chavez D."/>
            <person name="Chen E."/>
            <person name="Chen G."/>
            <person name="Chen Y."/>
            <person name="Chen Z."/>
            <person name="Chinault C."/>
            <person name="Ciccodicola A."/>
            <person name="Clark S.Y."/>
            <person name="Clarke G."/>
            <person name="Clee C.M."/>
            <person name="Clegg S."/>
            <person name="Clerc-Blankenburg K."/>
            <person name="Clifford K."/>
            <person name="Cobley V."/>
            <person name="Cole C.G."/>
            <person name="Conquer J.S."/>
            <person name="Corby N."/>
            <person name="Connor R.E."/>
            <person name="David R."/>
            <person name="Davies J."/>
            <person name="Davis C."/>
            <person name="Davis J."/>
            <person name="Delgado O."/>
            <person name="Deshazo D."/>
            <person name="Dhami P."/>
            <person name="Ding Y."/>
            <person name="Dinh H."/>
            <person name="Dodsworth S."/>
            <person name="Draper H."/>
            <person name="Dugan-Rocha S."/>
            <person name="Dunham A."/>
            <person name="Dunn M."/>
            <person name="Durbin K.J."/>
            <person name="Dutta I."/>
            <person name="Eades T."/>
            <person name="Ellwood M."/>
            <person name="Emery-Cohen A."/>
            <person name="Errington H."/>
            <person name="Evans K.L."/>
            <person name="Faulkner L."/>
            <person name="Francis F."/>
            <person name="Frankland J."/>
            <person name="Fraser A.E."/>
            <person name="Galgoczy P."/>
            <person name="Gilbert J."/>
            <person name="Gill R."/>
            <person name="Gloeckner G."/>
            <person name="Gregory S.G."/>
            <person name="Gribble S."/>
            <person name="Griffiths C."/>
            <person name="Grocock R."/>
            <person name="Gu Y."/>
            <person name="Gwilliam R."/>
            <person name="Hamilton C."/>
            <person name="Hart E.A."/>
            <person name="Hawes A."/>
            <person name="Heath P.D."/>
            <person name="Heitmann K."/>
            <person name="Hennig S."/>
            <person name="Hernandez J."/>
            <person name="Hinzmann B."/>
            <person name="Ho S."/>
            <person name="Hoffs M."/>
            <person name="Howden P.J."/>
            <person name="Huckle E.J."/>
            <person name="Hume J."/>
            <person name="Hunt P.J."/>
            <person name="Hunt A.R."/>
            <person name="Isherwood J."/>
            <person name="Jacob L."/>
            <person name="Johnson D."/>
            <person name="Jones S."/>
            <person name="de Jong P.J."/>
            <person name="Joseph S.S."/>
            <person name="Keenan S."/>
            <person name="Kelly S."/>
            <person name="Kershaw J.K."/>
            <person name="Khan Z."/>
            <person name="Kioschis P."/>
            <person name="Klages S."/>
            <person name="Knights A.J."/>
            <person name="Kosiura A."/>
            <person name="Kovar-Smith C."/>
            <person name="Laird G.K."/>
            <person name="Langford C."/>
            <person name="Lawlor S."/>
            <person name="Leversha M."/>
            <person name="Lewis L."/>
            <person name="Liu W."/>
            <person name="Lloyd C."/>
            <person name="Lloyd D.M."/>
            <person name="Loulseged H."/>
            <person name="Loveland J.E."/>
            <person name="Lovell J.D."/>
            <person name="Lozado R."/>
            <person name="Lu J."/>
            <person name="Lyne R."/>
            <person name="Ma J."/>
            <person name="Maheshwari M."/>
            <person name="Matthews L.H."/>
            <person name="McDowall J."/>
            <person name="McLaren S."/>
            <person name="McMurray A."/>
            <person name="Meidl P."/>
            <person name="Meitinger T."/>
            <person name="Milne S."/>
            <person name="Miner G."/>
            <person name="Mistry S.L."/>
            <person name="Morgan M."/>
            <person name="Morris S."/>
            <person name="Mueller I."/>
            <person name="Mullikin J.C."/>
            <person name="Nguyen N."/>
            <person name="Nordsiek G."/>
            <person name="Nyakatura G."/>
            <person name="O'dell C.N."/>
            <person name="Okwuonu G."/>
            <person name="Palmer S."/>
            <person name="Pandian R."/>
            <person name="Parker D."/>
            <person name="Parrish J."/>
            <person name="Pasternak S."/>
            <person name="Patel D."/>
            <person name="Pearce A.V."/>
            <person name="Pearson D.M."/>
            <person name="Pelan S.E."/>
            <person name="Perez L."/>
            <person name="Porter K.M."/>
            <person name="Ramsey Y."/>
            <person name="Reichwald K."/>
            <person name="Rhodes S."/>
            <person name="Ridler K.A."/>
            <person name="Schlessinger D."/>
            <person name="Schueler M.G."/>
            <person name="Sehra H.K."/>
            <person name="Shaw-Smith C."/>
            <person name="Shen H."/>
            <person name="Sheridan E.M."/>
            <person name="Shownkeen R."/>
            <person name="Skuce C.D."/>
            <person name="Smith M.L."/>
            <person name="Sotheran E.C."/>
            <person name="Steingruber H.E."/>
            <person name="Steward C.A."/>
            <person name="Storey R."/>
            <person name="Swann R.M."/>
            <person name="Swarbreck D."/>
            <person name="Tabor P.E."/>
            <person name="Taudien S."/>
            <person name="Taylor T."/>
            <person name="Teague B."/>
            <person name="Thomas K."/>
            <person name="Thorpe A."/>
            <person name="Timms K."/>
            <person name="Tracey A."/>
            <person name="Trevanion S."/>
            <person name="Tromans A.C."/>
            <person name="d'Urso M."/>
            <person name="Verduzco D."/>
            <person name="Villasana D."/>
            <person name="Waldron L."/>
            <person name="Wall M."/>
            <person name="Wang Q."/>
            <person name="Warren J."/>
            <person name="Warry G.L."/>
            <person name="Wei X."/>
            <person name="West A."/>
            <person name="Whitehead S.L."/>
            <person name="Whiteley M.N."/>
            <person name="Wilkinson J.E."/>
            <person name="Willey D.L."/>
            <person name="Williams G."/>
            <person name="Williams L."/>
            <person name="Williamson A."/>
            <person name="Williamson H."/>
            <person name="Wilming L."/>
            <person name="Woodmansey R.L."/>
            <person name="Wray P.W."/>
            <person name="Yen J."/>
            <person name="Zhang J."/>
            <person name="Zhou J."/>
            <person name="Zoghbi H."/>
            <person name="Zorilla S."/>
            <person name="Buck D."/>
            <person name="Reinhardt R."/>
            <person name="Poustka A."/>
            <person name="Rosenthal A."/>
            <person name="Lehrach H."/>
            <person name="Meindl A."/>
            <person name="Minx P.J."/>
            <person name="Hillier L.W."/>
            <person name="Willard H.F."/>
            <person name="Wilson R.K."/>
            <person name="Waterston R.H."/>
            <person name="Rice C.M."/>
            <person name="Vaudin M."/>
            <person name="Coulson A."/>
            <person name="Nelson D.L."/>
            <person name="Weinstock G."/>
            <person name="Sulston J.E."/>
            <person name="Durbin R.M."/>
            <person name="Hubbard T."/>
            <person name="Gibbs R.A."/>
            <person name="Beck S."/>
            <person name="Rogers J."/>
            <person name="Bentley D.R."/>
        </authorList>
    </citation>
    <scope>NUCLEOTIDE SEQUENCE [LARGE SCALE GENOMIC DNA]</scope>
</reference>
<reference key="3">
    <citation type="journal article" date="2004" name="Genome Res.">
        <title>The status, quality, and expansion of the NIH full-length cDNA project: the Mammalian Gene Collection (MGC).</title>
        <authorList>
            <consortium name="The MGC Project Team"/>
        </authorList>
    </citation>
    <scope>NUCLEOTIDE SEQUENCE [LARGE SCALE MRNA] (ISOFORM 2)</scope>
    <scope>NUCLEOTIDE SEQUENCE [LARGE SCALE MRNA] OF 1413-3187 (ISOFORM 6)</scope>
    <scope>VARIANT TYR-634</scope>
    <source>
        <tissue>Cerebellum</tissue>
        <tissue>Lung</tissue>
    </source>
</reference>
<reference key="4">
    <citation type="journal article" date="2021" name="Am. J. Hum. Genet.">
        <title>Deleterious variants in X-linked CFAP47 induce asthenoteratozoospermia and primary male infertility.</title>
        <authorList>
            <person name="Liu C."/>
            <person name="Tu C."/>
            <person name="Wang L."/>
            <person name="Wu H."/>
            <person name="Houston B.J."/>
            <person name="Mastrorosa F.K."/>
            <person name="Zhang W."/>
            <person name="Shen Y."/>
            <person name="Wang J."/>
            <person name="Tian S."/>
            <person name="Meng L."/>
            <person name="Cong J."/>
            <person name="Yang S."/>
            <person name="Jiang Y."/>
            <person name="Tang S."/>
            <person name="Zeng Y."/>
            <person name="Lv M."/>
            <person name="Lin G."/>
            <person name="Li J."/>
            <person name="Saiyin H."/>
            <person name="He X."/>
            <person name="Jin L."/>
            <person name="Toure A."/>
            <person name="Ray P.F."/>
            <person name="Veltman J.A."/>
            <person name="Shi Q."/>
            <person name="O'Bryan M.K."/>
            <person name="Cao Y."/>
            <person name="Tan Y.Q."/>
            <person name="Zhang F."/>
        </authorList>
    </citation>
    <scope>VARIANTS SPGFX3 GLY-1742; ASN-2385 AND THR-2890</scope>
    <scope>FUNCTION</scope>
    <scope>TISSUE SPECIFICITY</scope>
    <scope>SUBCELLULAR LOCATION</scope>
    <scope>CHARACTERIZATION OF VARIANTS SPGFX3 GLY-1742; ASN-2385 AND THR-2890</scope>
    <scope>INTERACTION WITH CFAP65</scope>
</reference>
<dbReference type="EMBL" id="AK093920">
    <property type="protein sequence ID" value="BAC04251.1"/>
    <property type="status" value="ALT_INIT"/>
    <property type="molecule type" value="mRNA"/>
</dbReference>
<dbReference type="EMBL" id="AK126295">
    <property type="protein sequence ID" value="BAC86517.1"/>
    <property type="molecule type" value="mRNA"/>
</dbReference>
<dbReference type="EMBL" id="AC233304">
    <property type="status" value="NOT_ANNOTATED_CDS"/>
    <property type="molecule type" value="Genomic_DNA"/>
</dbReference>
<dbReference type="EMBL" id="AL590065">
    <property type="status" value="NOT_ANNOTATED_CDS"/>
    <property type="molecule type" value="Genomic_DNA"/>
</dbReference>
<dbReference type="EMBL" id="AL603753">
    <property type="status" value="NOT_ANNOTATED_CDS"/>
    <property type="molecule type" value="Genomic_DNA"/>
</dbReference>
<dbReference type="EMBL" id="AL606467">
    <property type="status" value="NOT_ANNOTATED_CDS"/>
    <property type="molecule type" value="Genomic_DNA"/>
</dbReference>
<dbReference type="EMBL" id="AL606516">
    <property type="status" value="NOT_ANNOTATED_CDS"/>
    <property type="molecule type" value="Genomic_DNA"/>
</dbReference>
<dbReference type="EMBL" id="KF459051">
    <property type="status" value="NOT_ANNOTATED_CDS"/>
    <property type="molecule type" value="Genomic_DNA"/>
</dbReference>
<dbReference type="EMBL" id="BC027936">
    <property type="protein sequence ID" value="AAH27936.1"/>
    <property type="molecule type" value="mRNA"/>
</dbReference>
<dbReference type="EMBL" id="BC101698">
    <property type="protein sequence ID" value="AAI01699.1"/>
    <property type="status" value="ALT_INIT"/>
    <property type="molecule type" value="mRNA"/>
</dbReference>
<dbReference type="EMBL" id="BC101700">
    <property type="protein sequence ID" value="AAI01701.1"/>
    <property type="status" value="ALT_INIT"/>
    <property type="molecule type" value="mRNA"/>
</dbReference>
<dbReference type="CCDS" id="CCDS14237.2">
    <molecule id="Q6ZTR5-1"/>
</dbReference>
<dbReference type="CCDS" id="CCDS83464.1">
    <molecule id="Q6ZTR5-5"/>
</dbReference>
<dbReference type="RefSeq" id="NP_001291477.1">
    <molecule id="Q6ZTR5-5"/>
    <property type="nucleotide sequence ID" value="NM_001304548.2"/>
</dbReference>
<dbReference type="RefSeq" id="NP_689845.2">
    <molecule id="Q6ZTR5-1"/>
    <property type="nucleotide sequence ID" value="NM_152632.4"/>
</dbReference>
<dbReference type="RefSeq" id="XP_016884942.1">
    <molecule id="Q6ZTR5-6"/>
    <property type="nucleotide sequence ID" value="XM_017029453.2"/>
</dbReference>
<dbReference type="RefSeq" id="XP_054182876.1">
    <molecule id="Q6ZTR5-6"/>
    <property type="nucleotide sequence ID" value="XM_054326901.1"/>
</dbReference>
<dbReference type="SMR" id="Q6ZTR5"/>
<dbReference type="BioGRID" id="127994">
    <property type="interactions" value="6"/>
</dbReference>
<dbReference type="BioGRID" id="130387">
    <property type="interactions" value="4"/>
</dbReference>
<dbReference type="FunCoup" id="Q6ZTR5">
    <property type="interactions" value="74"/>
</dbReference>
<dbReference type="IntAct" id="Q6ZTR5">
    <property type="interactions" value="6"/>
</dbReference>
<dbReference type="MINT" id="Q6ZTR5"/>
<dbReference type="STRING" id="9606.ENSP00000367922"/>
<dbReference type="GlyGen" id="Q6ZTR5">
    <property type="glycosylation" value="3 sites, 1 O-linked glycan (3 sites)"/>
</dbReference>
<dbReference type="iPTMnet" id="Q6ZTR5"/>
<dbReference type="PhosphoSitePlus" id="Q6ZTR5"/>
<dbReference type="BioMuta" id="CFAP47"/>
<dbReference type="DMDM" id="74751127"/>
<dbReference type="jPOST" id="Q6ZTR5"/>
<dbReference type="MassIVE" id="Q6ZTR5"/>
<dbReference type="PaxDb" id="9606-ENSP00000297866"/>
<dbReference type="PeptideAtlas" id="Q6ZTR5"/>
<dbReference type="ProteomicsDB" id="1739"/>
<dbReference type="ProteomicsDB" id="68288">
    <molecule id="Q6ZTR5-1"/>
</dbReference>
<dbReference type="ProteomicsDB" id="68289">
    <molecule id="Q6ZTR5-2"/>
</dbReference>
<dbReference type="ProteomicsDB" id="72578"/>
<dbReference type="Antibodypedia" id="42875">
    <property type="antibodies" value="74 antibodies from 19 providers"/>
</dbReference>
<dbReference type="DNASU" id="286464"/>
<dbReference type="Ensembl" id="ENST00000297866.9">
    <molecule id="Q6ZTR5-1"/>
    <property type="protein sequence ID" value="ENSP00000297866.5"/>
    <property type="gene ID" value="ENSG00000165164.14"/>
</dbReference>
<dbReference type="Ensembl" id="ENST00000378653.8">
    <molecule id="Q6ZTR5-5"/>
    <property type="protein sequence ID" value="ENSP00000367922.5"/>
    <property type="gene ID" value="ENSG00000165164.14"/>
</dbReference>
<dbReference type="Ensembl" id="ENST00000493930.1">
    <molecule id="Q6ZTR5-2"/>
    <property type="protein sequence ID" value="ENSP00000433564.1"/>
    <property type="gene ID" value="ENSG00000165164.14"/>
</dbReference>
<dbReference type="GeneID" id="286464"/>
<dbReference type="KEGG" id="hsa:286464"/>
<dbReference type="MANE-Select" id="ENST00000378653.8">
    <property type="protein sequence ID" value="ENSP00000367922.5"/>
    <property type="RefSeq nucleotide sequence ID" value="NM_001304548.2"/>
    <property type="RefSeq protein sequence ID" value="NP_001291477.1"/>
</dbReference>
<dbReference type="UCSC" id="uc004ddj.4">
    <molecule id="Q6ZTR5-5"/>
    <property type="organism name" value="human"/>
</dbReference>
<dbReference type="UCSC" id="uc011mkc.4">
    <property type="organism name" value="human"/>
</dbReference>
<dbReference type="UCSC" id="uc064ymy.1">
    <property type="organism name" value="human"/>
</dbReference>
<dbReference type="AGR" id="HGNC:26708"/>
<dbReference type="CTD" id="286464"/>
<dbReference type="DisGeNET" id="286464"/>
<dbReference type="GeneCards" id="CFAP47"/>
<dbReference type="HGNC" id="HGNC:26708">
    <property type="gene designation" value="CFAP47"/>
</dbReference>
<dbReference type="HPA" id="ENSG00000165164">
    <property type="expression patterns" value="Tissue enhanced (fallopian tube, pituitary gland, retina)"/>
</dbReference>
<dbReference type="MalaCards" id="CFAP47"/>
<dbReference type="MIM" id="301057">
    <property type="type" value="gene"/>
</dbReference>
<dbReference type="MIM" id="301059">
    <property type="type" value="phenotype"/>
</dbReference>
<dbReference type="neXtProt" id="NX_Q6ZTR5"/>
<dbReference type="OpenTargets" id="ENSG00000165164"/>
<dbReference type="Orphanet" id="137893">
    <property type="disease" value="Male infertility due to large-headed multiflagellar polyploid spermatozoa"/>
</dbReference>
<dbReference type="PharmGKB" id="PA145149062"/>
<dbReference type="VEuPathDB" id="HostDB:ENSG00000165164"/>
<dbReference type="eggNOG" id="ENOG502QQ4Q">
    <property type="taxonomic scope" value="Eukaryota"/>
</dbReference>
<dbReference type="GeneTree" id="ENSGT00940000163202"/>
<dbReference type="HOGENOM" id="CLU_008435_0_0_1"/>
<dbReference type="InParanoid" id="Q6ZTR5"/>
<dbReference type="OMA" id="PMTNEAK"/>
<dbReference type="OrthoDB" id="10060824at2759"/>
<dbReference type="PAN-GO" id="Q6ZTR5">
    <property type="GO annotations" value="3 GO annotations based on evolutionary models"/>
</dbReference>
<dbReference type="TreeFam" id="TF328359"/>
<dbReference type="TreeFam" id="TF337362"/>
<dbReference type="TreeFam" id="TF343741"/>
<dbReference type="PathwayCommons" id="Q6ZTR5"/>
<dbReference type="SignaLink" id="Q6ZTR5"/>
<dbReference type="BioGRID-ORCS" id="286464">
    <property type="hits" value="50 hits in 783 CRISPR screens"/>
</dbReference>
<dbReference type="ChiTaRS" id="CFAP47">
    <property type="organism name" value="human"/>
</dbReference>
<dbReference type="GenomeRNAi" id="286464"/>
<dbReference type="Pharos" id="Q6ZTR5">
    <property type="development level" value="Tdark"/>
</dbReference>
<dbReference type="PRO" id="PR:Q6ZTR5"/>
<dbReference type="Proteomes" id="UP000005640">
    <property type="component" value="Chromosome X"/>
</dbReference>
<dbReference type="RNAct" id="Q6ZTR5">
    <property type="molecule type" value="protein"/>
</dbReference>
<dbReference type="Bgee" id="ENSG00000165164">
    <property type="expression patterns" value="Expressed in bronchial epithelial cell and 65 other cell types or tissues"/>
</dbReference>
<dbReference type="ExpressionAtlas" id="Q6ZTR5">
    <property type="expression patterns" value="baseline and differential"/>
</dbReference>
<dbReference type="GO" id="GO:0005929">
    <property type="term" value="C:cilium"/>
    <property type="evidence" value="ECO:0000318"/>
    <property type="project" value="GO_Central"/>
</dbReference>
<dbReference type="GO" id="GO:0005737">
    <property type="term" value="C:cytoplasm"/>
    <property type="evidence" value="ECO:0007669"/>
    <property type="project" value="UniProtKB-KW"/>
</dbReference>
<dbReference type="GO" id="GO:0005856">
    <property type="term" value="C:cytoskeleton"/>
    <property type="evidence" value="ECO:0007669"/>
    <property type="project" value="UniProtKB-KW"/>
</dbReference>
<dbReference type="GO" id="GO:0031514">
    <property type="term" value="C:motile cilium"/>
    <property type="evidence" value="ECO:0007669"/>
    <property type="project" value="UniProtKB-KW"/>
</dbReference>
<dbReference type="GO" id="GO:0120212">
    <property type="term" value="C:sperm head-tail coupling apparatus"/>
    <property type="evidence" value="ECO:0000314"/>
    <property type="project" value="UniProtKB"/>
</dbReference>
<dbReference type="GO" id="GO:0060271">
    <property type="term" value="P:cilium assembly"/>
    <property type="evidence" value="ECO:0000318"/>
    <property type="project" value="GO_Central"/>
</dbReference>
<dbReference type="GO" id="GO:0007288">
    <property type="term" value="P:sperm axoneme assembly"/>
    <property type="evidence" value="ECO:0000315"/>
    <property type="project" value="UniProtKB"/>
</dbReference>
<dbReference type="Gene3D" id="1.10.418.10">
    <property type="entry name" value="Calponin-like domain"/>
    <property type="match status" value="1"/>
</dbReference>
<dbReference type="Gene3D" id="2.60.40.10">
    <property type="entry name" value="Immunoglobulins"/>
    <property type="match status" value="6"/>
</dbReference>
<dbReference type="InterPro" id="IPR056343">
    <property type="entry name" value="CFAP47_dom"/>
</dbReference>
<dbReference type="InterPro" id="IPR001715">
    <property type="entry name" value="CH_dom"/>
</dbReference>
<dbReference type="InterPro" id="IPR036872">
    <property type="entry name" value="CH_dom_sf"/>
</dbReference>
<dbReference type="InterPro" id="IPR053879">
    <property type="entry name" value="HYDIN_VesB_CFA65-like_Ig"/>
</dbReference>
<dbReference type="InterPro" id="IPR013783">
    <property type="entry name" value="Ig-like_fold"/>
</dbReference>
<dbReference type="PANTHER" id="PTHR45912">
    <property type="entry name" value="CILIA- AND FLAGELLA-ASSOCIATED PROTEIN 47"/>
    <property type="match status" value="1"/>
</dbReference>
<dbReference type="PANTHER" id="PTHR45912:SF3">
    <property type="entry name" value="CILIA- AND FLAGELLA-ASSOCIATED PROTEIN 47"/>
    <property type="match status" value="1"/>
</dbReference>
<dbReference type="Pfam" id="PF24529">
    <property type="entry name" value="CFAP47"/>
    <property type="match status" value="1"/>
</dbReference>
<dbReference type="Pfam" id="PF22544">
    <property type="entry name" value="HYDIN_VesB_CFA65-like_Ig"/>
    <property type="match status" value="1"/>
</dbReference>
<dbReference type="SUPFAM" id="SSF47576">
    <property type="entry name" value="Calponin-homology domain, CH-domain"/>
    <property type="match status" value="1"/>
</dbReference>
<dbReference type="PROSITE" id="PS50021">
    <property type="entry name" value="CH"/>
    <property type="match status" value="1"/>
</dbReference>
<sequence>MNTQKGSLTINVHRGSLAMSIQRGSLVPRDMDSSGRDMQLRVIPAEVKFLDTMAGRVYRLPITVHNICRWNQKIRFKEPVKPQFKLMLTSLDKELASGLQMTAMVEYHPDKDEDTFDRLLISIENKTTEIPLIGLIPSCQLEIESVVNFGTLVANSKVYSKEITITNHGKAPGIFKAEYHGQLPILIFPTSGIVDAKSSMVIKVDFCADQPRIVDEEAIVILQGQPEMLLSIKAHVVEQIIELLSMSSDRRLECIHFGPVFFGSSKIKHARVYNNSPEPINWVAIIQDDAVGEELGTDIQQRTDIALNNLTYIRKIKNIDTTIIISCLPNEGTLQPYQKTVITFCFTPKLMAVGKKDIGPSYRQDYALFLRFESVGSKDGFLRDDDYKTIKSERFQKVELALTGTGLPVLLQFDPGPVLNFKPCFMGERSEIQCIIKNQCELLPVTYHFKKTANFEIDPEKGKITGGGMVDVMCSFVPHQLGVFKVKQMIEIIGLVAEEDLQSLSVKSFHHVYLAFNSICKASTKKVVMKFDPGILPSIRNPTGKFVVKDLAKRKNYAPVAMLQSAMTRTHNHRSCEEPVKDMLLAFPNDRAATIRSKDHHKHFRPIFTKVPRFNYVNHDFAYTTFEKQQKKLHENYYAMYLKYLRSVRLQKKQAERERMYSYDDTDIGLEPGSGLKSPSLSEAEIEEELSSAANSIRANRLLTTRGIASQEEESVRRKVLKGLKSEPSTPQEKHDCSLMLTPKQIHQVIVGPSVLNFGNICVNSPNTHLLHVINMLPMHVLLQLDTDLEELQKTNQFSYVILPTSSTYISMVFDSPTIGKFWKSFTFTVNNVPSGHILVVAVVQPVTLELSSNELVLRPRGFFMKTCFRGTVRLYNRQNCCAQFQWQPVNTGRGIAFSICPAKGTVEAYSSLECEVTWQQGFSSPEEGEFILHVFQGNALKLKCVAHLGRTKVLLLQPRILFSNCPQGLTTWRKAILQNVGQNHAYFKVCSQSLLPIINIIPSQGIVPFGGITVLNISCKPTVAEKFDTRAKVSIRHANVIDLRIGGSAEIADVEINPDVFNFSGAYIGGTQIIPFVIKNKGITRARVEFNLKDFPDFSMDLKDKSEEFKDPAVPYIYSLELEENTSLECSITFSPKEVTVVEFIIQVQINFFESSKLYTKYLSSSPSNPKTVPLIRPCYVQATALQSPLNLSSTKFVFEIPLHEMNPNNKVTKTQNLVLYNITKHHVTWTLDLSNTGKLFKDGTFKFSVLNGILRPNEKYNVSISFCPNRPGTYTADIPMLLNYIPVCYKILHLTGEVKSPELLFDPPFIFFTPVPLDITTVMDINILPQNYFRNSTLCVQIPTVRLLDGEEIHPLSVKFPKGRVIPGSHSGINNKLTCHLSFKSSKPVSFFTNLLFCDDRKNWFSLPVTATAENCILTIYPYMAIHLDKQNIILKNDKDEYLKKTRDGVLPPYQDAKPPSPASIKKTYTTSKFNDAEPAKGNLFIGVEVLPENLHLDESETSEEDHGSLEKEKYEQFLSLEEGTKAHYFFEKVVNAAQTWFSLFGWPEGPHSFSIPETIRRDVYKMQFYSSTSPPQKFSRQNDFSKYNKTIYDVLLHLSGKMPPGINSSQSLPVDNHEKRVIQLHLQHSSLLDFLNAQGGCISHVLPEFLLEPEDYKRWIEIMSSTNTMPVSSCTPKKKCSIVIEMSKFEAWSKRAWTDVFLQIYKVLVLSRVVPYCSNNMPPICVQNTPKVNPCFASSNIYSDSERILLSWMNINYENTRHVIWKNCHKDVIPSERWIVNFDKDLSDGLVFATQLGAYCPFLIESHFINMYTRPKSPEEYLHNCLIIVNTLYEIDFDVEIQATDICDPNPILMLMLCVYMYERLPTYLPKKVVSFECTLHDTVLNKILLKNSSSRNLVYNARIVGRDAADFSLSQKGNVVTISPRNEINVTLKFTSRFIRPAEASLLLISKPKNAVRGITMTFALKGKVLDFKAIDIIKCESPCYQFQEVTVNVKNPFHTAGDFSVILVESSTFVSSPTKLTESRQYPKHDDDMSSSGSDTDQGCSDSPNVLHTSIKSTFIREFFCSMHTVHLGVKGTSSLELRFLPFNMHVRYCVIILSNKKIGQLIYVAEGKGMTPLPSSCLPMNTSSSPVYYSTTREEGPNKKYPVLYLKCKPYQILYVDLKLPMTNEAKEKALAFAAQQQMSSIEYERRLITGTLESSSIRVAIALLGLTKIETLMLFRISKLRKPKTVSYTTEVSLPKYFYIPEKISIPWIPEPQVIKLSKAKASDGSVPLPLQFLPLQSGRYPCKILLKSRYDVRAYYVEGIVNEEQPEAKFEFETPAFEALTQNIPIKNQTNDKWTFQVTIEGEWFYGPVDLHVGPDEIVEYPLTFKPIFECVITGKLILQNEVDGREHIFDIKGVGKKPSALEHITVECQVGNVTQKHITLPHFTNTALTFKVTADLPIVWGNPQITVYPYKEILYLIHVRPWKRGILKGTITFSTTRRCTTRRKHDDYEEDTDQDQALSCLDSITEQSSILDDADTYGNFNNLRFWYNLEIHSTPGPPIEIMEMTCIALDSTCIEIPLSNPKDRGLHLEVQLTSAALNGDNEIILSPLQCTKYIVWYSPATTGYSDESIIFQPEMAEEFWYLLKLTIELPKPTTMPEIQCDLGKHVTQIIPLVNCTHETLKLQVTNSNPENFVLDINRKSQLIISPHSTTELPVLFYPSALGRADHQACINFYCTQFTEWKFYLSGVGLFPQPLDTERITTRIGLQSTIVIPFKNPTMEDVLIDIILTSVEHPRNLVMDHCWDSFIYESSAFRFSSPSEIQGIALPPKGNIDISLLFIPQIMKLHKTMVIIEMTKANGKYWPIDNFDELDIKFKSIVGIDSEEIQAIHWIYPIVGLPQAPPPKSPPVVIQCQSRKRAEEKVEIILNAGFFGFSLTPDLTEVLVIPKRNSHNFCEDPNEIPKIHEFEYEIQFESEAMKSKLESCVALYMIEKSYDIMAKRITFIFNLVFTPKKPLRSHITLKIECVTEGIWKFPIMLIATEPDTDAVIDIEGVGLFKESVFELRLKSQTRNPEPFTAHFLPGSDLEFFVKPQAGELLPFNTNGTLITVGFKPKMYCRKYKATLVIQTEEMYWKYEINGLTPTTVPPKNAKAKIDATHKTHDNMPVRPHNFVRENTKLIRTGVSSTIKGAPLVKNQ</sequence>
<organism>
    <name type="scientific">Homo sapiens</name>
    <name type="common">Human</name>
    <dbReference type="NCBI Taxonomy" id="9606"/>
    <lineage>
        <taxon>Eukaryota</taxon>
        <taxon>Metazoa</taxon>
        <taxon>Chordata</taxon>
        <taxon>Craniata</taxon>
        <taxon>Vertebrata</taxon>
        <taxon>Euteleostomi</taxon>
        <taxon>Mammalia</taxon>
        <taxon>Eutheria</taxon>
        <taxon>Euarchontoglires</taxon>
        <taxon>Primates</taxon>
        <taxon>Haplorrhini</taxon>
        <taxon>Catarrhini</taxon>
        <taxon>Hominidae</taxon>
        <taxon>Homo</taxon>
    </lineage>
</organism>
<gene>
    <name evidence="9" type="primary">CFAP47</name>
    <name evidence="9" type="synonym">CHDC2</name>
    <name evidence="9" type="synonym">CXorf22</name>
    <name evidence="9" type="synonym">CXorf30</name>
    <name evidence="9" type="synonym">CXorf59</name>
</gene>